<comment type="function">
    <text evidence="1">Binds as a heterodimer with protein bS6 to the central domain of the 16S rRNA, where it helps stabilize the platform of the 30S subunit.</text>
</comment>
<comment type="subunit">
    <text evidence="1">Part of the 30S ribosomal subunit. Forms a tight heterodimer with protein bS6.</text>
</comment>
<comment type="similarity">
    <text evidence="1">Belongs to the bacterial ribosomal protein bS18 family.</text>
</comment>
<protein>
    <recommendedName>
        <fullName evidence="1">Small ribosomal subunit protein bS18</fullName>
    </recommendedName>
    <alternativeName>
        <fullName evidence="2">30S ribosomal protein S18</fullName>
    </alternativeName>
</protein>
<proteinExistence type="inferred from homology"/>
<keyword id="KW-0687">Ribonucleoprotein</keyword>
<keyword id="KW-0689">Ribosomal protein</keyword>
<keyword id="KW-0694">RNA-binding</keyword>
<keyword id="KW-0699">rRNA-binding</keyword>
<accession>B7V1Z7</accession>
<sequence length="76" mass="8873">MARFFRRRKFCRFTAEGVKEIDYKDLNTLKAYVSETGKIVPSRITGTKAKYQRQLATAIKRARYLALLPYTDSHGR</sequence>
<feature type="chain" id="PRO_1000119286" description="Small ribosomal subunit protein bS18">
    <location>
        <begin position="1"/>
        <end position="76"/>
    </location>
</feature>
<dbReference type="EMBL" id="FM209186">
    <property type="protein sequence ID" value="CAW30074.1"/>
    <property type="molecule type" value="Genomic_DNA"/>
</dbReference>
<dbReference type="RefSeq" id="WP_003095634.1">
    <property type="nucleotide sequence ID" value="NC_011770.1"/>
</dbReference>
<dbReference type="SMR" id="B7V1Z7"/>
<dbReference type="GeneID" id="79910526"/>
<dbReference type="KEGG" id="pag:PLES_53201"/>
<dbReference type="HOGENOM" id="CLU_148710_2_3_6"/>
<dbReference type="GO" id="GO:0022627">
    <property type="term" value="C:cytosolic small ribosomal subunit"/>
    <property type="evidence" value="ECO:0007669"/>
    <property type="project" value="TreeGrafter"/>
</dbReference>
<dbReference type="GO" id="GO:0070181">
    <property type="term" value="F:small ribosomal subunit rRNA binding"/>
    <property type="evidence" value="ECO:0007669"/>
    <property type="project" value="TreeGrafter"/>
</dbReference>
<dbReference type="GO" id="GO:0003735">
    <property type="term" value="F:structural constituent of ribosome"/>
    <property type="evidence" value="ECO:0007669"/>
    <property type="project" value="InterPro"/>
</dbReference>
<dbReference type="GO" id="GO:0006412">
    <property type="term" value="P:translation"/>
    <property type="evidence" value="ECO:0007669"/>
    <property type="project" value="UniProtKB-UniRule"/>
</dbReference>
<dbReference type="FunFam" id="4.10.640.10:FF:000001">
    <property type="entry name" value="30S ribosomal protein S18"/>
    <property type="match status" value="1"/>
</dbReference>
<dbReference type="Gene3D" id="4.10.640.10">
    <property type="entry name" value="Ribosomal protein S18"/>
    <property type="match status" value="1"/>
</dbReference>
<dbReference type="HAMAP" id="MF_00270">
    <property type="entry name" value="Ribosomal_bS18"/>
    <property type="match status" value="1"/>
</dbReference>
<dbReference type="InterPro" id="IPR001648">
    <property type="entry name" value="Ribosomal_bS18"/>
</dbReference>
<dbReference type="InterPro" id="IPR018275">
    <property type="entry name" value="Ribosomal_bS18_CS"/>
</dbReference>
<dbReference type="InterPro" id="IPR036870">
    <property type="entry name" value="Ribosomal_bS18_sf"/>
</dbReference>
<dbReference type="NCBIfam" id="TIGR00165">
    <property type="entry name" value="S18"/>
    <property type="match status" value="1"/>
</dbReference>
<dbReference type="PANTHER" id="PTHR13479">
    <property type="entry name" value="30S RIBOSOMAL PROTEIN S18"/>
    <property type="match status" value="1"/>
</dbReference>
<dbReference type="PANTHER" id="PTHR13479:SF40">
    <property type="entry name" value="SMALL RIBOSOMAL SUBUNIT PROTEIN BS18M"/>
    <property type="match status" value="1"/>
</dbReference>
<dbReference type="Pfam" id="PF01084">
    <property type="entry name" value="Ribosomal_S18"/>
    <property type="match status" value="1"/>
</dbReference>
<dbReference type="PRINTS" id="PR00974">
    <property type="entry name" value="RIBOSOMALS18"/>
</dbReference>
<dbReference type="SUPFAM" id="SSF46911">
    <property type="entry name" value="Ribosomal protein S18"/>
    <property type="match status" value="1"/>
</dbReference>
<dbReference type="PROSITE" id="PS00057">
    <property type="entry name" value="RIBOSOMAL_S18"/>
    <property type="match status" value="1"/>
</dbReference>
<reference key="1">
    <citation type="journal article" date="2009" name="Genome Res.">
        <title>Newly introduced genomic prophage islands are critical determinants of in vivo competitiveness in the Liverpool epidemic strain of Pseudomonas aeruginosa.</title>
        <authorList>
            <person name="Winstanley C."/>
            <person name="Langille M.G.I."/>
            <person name="Fothergill J.L."/>
            <person name="Kukavica-Ibrulj I."/>
            <person name="Paradis-Bleau C."/>
            <person name="Sanschagrin F."/>
            <person name="Thomson N.R."/>
            <person name="Winsor G.L."/>
            <person name="Quail M.A."/>
            <person name="Lennard N."/>
            <person name="Bignell A."/>
            <person name="Clarke L."/>
            <person name="Seeger K."/>
            <person name="Saunders D."/>
            <person name="Harris D."/>
            <person name="Parkhill J."/>
            <person name="Hancock R.E.W."/>
            <person name="Brinkman F.S.L."/>
            <person name="Levesque R.C."/>
        </authorList>
    </citation>
    <scope>NUCLEOTIDE SEQUENCE [LARGE SCALE GENOMIC DNA]</scope>
    <source>
        <strain>LESB58</strain>
    </source>
</reference>
<name>RS18_PSEA8</name>
<evidence type="ECO:0000255" key="1">
    <source>
        <dbReference type="HAMAP-Rule" id="MF_00270"/>
    </source>
</evidence>
<evidence type="ECO:0000305" key="2"/>
<organism>
    <name type="scientific">Pseudomonas aeruginosa (strain LESB58)</name>
    <dbReference type="NCBI Taxonomy" id="557722"/>
    <lineage>
        <taxon>Bacteria</taxon>
        <taxon>Pseudomonadati</taxon>
        <taxon>Pseudomonadota</taxon>
        <taxon>Gammaproteobacteria</taxon>
        <taxon>Pseudomonadales</taxon>
        <taxon>Pseudomonadaceae</taxon>
        <taxon>Pseudomonas</taxon>
    </lineage>
</organism>
<gene>
    <name evidence="1" type="primary">rpsR</name>
    <name type="ordered locus">PLES_53201</name>
</gene>